<protein>
    <recommendedName>
        <fullName>Anthranilate synthase component 2</fullName>
        <shortName>AS</shortName>
        <shortName>ASII</shortName>
        <ecNumber>4.1.3.27</ecNumber>
    </recommendedName>
    <alternativeName>
        <fullName>Anthranilate synthase, GATase component</fullName>
    </alternativeName>
    <alternativeName>
        <fullName>Anthranilate synthase, glutamine amidotransferase component</fullName>
    </alternativeName>
</protein>
<feature type="chain" id="PRO_0000390894" description="Anthranilate synthase component 2">
    <location>
        <begin position="1"/>
        <end position="232"/>
    </location>
</feature>
<feature type="domain" description="Glutamine amidotransferase type-1" evidence="3">
    <location>
        <begin position="2"/>
        <end position="198"/>
    </location>
</feature>
<feature type="active site" description="Nucleophile; for GATase activity" evidence="3">
    <location>
        <position position="83"/>
    </location>
</feature>
<feature type="active site" description="For GATase activity" evidence="3">
    <location>
        <position position="172"/>
    </location>
</feature>
<feature type="active site" description="For GATase activity" evidence="3">
    <location>
        <position position="174"/>
    </location>
</feature>
<feature type="binding site" evidence="2">
    <location>
        <begin position="55"/>
        <end position="57"/>
    </location>
    <ligand>
        <name>L-glutamine</name>
        <dbReference type="ChEBI" id="CHEBI:58359"/>
    </ligand>
</feature>
<feature type="binding site" evidence="2">
    <location>
        <position position="87"/>
    </location>
    <ligand>
        <name>L-glutamine</name>
        <dbReference type="ChEBI" id="CHEBI:58359"/>
    </ligand>
</feature>
<feature type="binding site" evidence="2">
    <location>
        <begin position="133"/>
        <end position="134"/>
    </location>
    <ligand>
        <name>L-glutamine</name>
        <dbReference type="ChEBI" id="CHEBI:58359"/>
    </ligand>
</feature>
<comment type="function">
    <text evidence="1">Part of a heterotetrameric complex that catalyzes the two-step biosynthesis of anthranilate, an intermediate in the biosynthesis of L-tryptophan. In the first step, the glutamine-binding beta subunit (TrpG) of anthranilate synthase (AS) provides the glutamine amidotransferase activity which generates ammonia as a substrate that, along with chorismate, is used in the second step, catalyzed by the large alpha subunit of AS (TrpE) to produce anthranilate. In the absence of TrpG, TrpE can synthesize anthranilate directly from chorismate and high concentrations of ammonia (By similarity).</text>
</comment>
<comment type="catalytic activity">
    <reaction>
        <text>chorismate + L-glutamine = anthranilate + pyruvate + L-glutamate + H(+)</text>
        <dbReference type="Rhea" id="RHEA:21732"/>
        <dbReference type="ChEBI" id="CHEBI:15361"/>
        <dbReference type="ChEBI" id="CHEBI:15378"/>
        <dbReference type="ChEBI" id="CHEBI:16567"/>
        <dbReference type="ChEBI" id="CHEBI:29748"/>
        <dbReference type="ChEBI" id="CHEBI:29985"/>
        <dbReference type="ChEBI" id="CHEBI:58359"/>
        <dbReference type="EC" id="4.1.3.27"/>
    </reaction>
</comment>
<comment type="pathway">
    <text>Amino-acid biosynthesis; L-tryptophan biosynthesis; L-tryptophan from chorismate: step 1/5.</text>
</comment>
<comment type="subunit">
    <text evidence="1">Heterotetramer consisting of two non-identical subunits: a beta subunit (TrpG) and a large alpha subunit (TrpE).</text>
</comment>
<comment type="miscellaneous">
    <text>Was identified as a high-confidence drug target.</text>
</comment>
<gene>
    <name type="primary">trpG</name>
    <name type="ordered locus">Rv0013</name>
</gene>
<reference key="1">
    <citation type="journal article" date="1998" name="Nature">
        <title>Deciphering the biology of Mycobacterium tuberculosis from the complete genome sequence.</title>
        <authorList>
            <person name="Cole S.T."/>
            <person name="Brosch R."/>
            <person name="Parkhill J."/>
            <person name="Garnier T."/>
            <person name="Churcher C.M."/>
            <person name="Harris D.E."/>
            <person name="Gordon S.V."/>
            <person name="Eiglmeier K."/>
            <person name="Gas S."/>
            <person name="Barry C.E. III"/>
            <person name="Tekaia F."/>
            <person name="Badcock K."/>
            <person name="Basham D."/>
            <person name="Brown D."/>
            <person name="Chillingworth T."/>
            <person name="Connor R."/>
            <person name="Davies R.M."/>
            <person name="Devlin K."/>
            <person name="Feltwell T."/>
            <person name="Gentles S."/>
            <person name="Hamlin N."/>
            <person name="Holroyd S."/>
            <person name="Hornsby T."/>
            <person name="Jagels K."/>
            <person name="Krogh A."/>
            <person name="McLean J."/>
            <person name="Moule S."/>
            <person name="Murphy L.D."/>
            <person name="Oliver S."/>
            <person name="Osborne J."/>
            <person name="Quail M.A."/>
            <person name="Rajandream M.A."/>
            <person name="Rogers J."/>
            <person name="Rutter S."/>
            <person name="Seeger K."/>
            <person name="Skelton S."/>
            <person name="Squares S."/>
            <person name="Squares R."/>
            <person name="Sulston J.E."/>
            <person name="Taylor K."/>
            <person name="Whitehead S."/>
            <person name="Barrell B.G."/>
        </authorList>
    </citation>
    <scope>NUCLEOTIDE SEQUENCE [LARGE SCALE GENOMIC DNA]</scope>
    <source>
        <strain>ATCC 25618 / H37Rv</strain>
    </source>
</reference>
<reference key="2">
    <citation type="journal article" date="2008" name="BMC Syst. Biol.">
        <title>targetTB: a target identification pipeline for Mycobacterium tuberculosis through an interactome, reactome and genome-scale structural analysis.</title>
        <authorList>
            <person name="Raman K."/>
            <person name="Yeturu K."/>
            <person name="Chandra N."/>
        </authorList>
    </citation>
    <scope>IDENTIFICATION AS A DRUG TARGET [LARGE SCALE ANALYSIS]</scope>
</reference>
<reference key="3">
    <citation type="journal article" date="2011" name="Mol. Cell. Proteomics">
        <title>Proteogenomic analysis of Mycobacterium tuberculosis by high resolution mass spectrometry.</title>
        <authorList>
            <person name="Kelkar D.S."/>
            <person name="Kumar D."/>
            <person name="Kumar P."/>
            <person name="Balakrishnan L."/>
            <person name="Muthusamy B."/>
            <person name="Yadav A.K."/>
            <person name="Shrivastava P."/>
            <person name="Marimuthu A."/>
            <person name="Anand S."/>
            <person name="Sundaram H."/>
            <person name="Kingsbury R."/>
            <person name="Harsha H.C."/>
            <person name="Nair B."/>
            <person name="Prasad T.S."/>
            <person name="Chauhan D.S."/>
            <person name="Katoch K."/>
            <person name="Katoch V.M."/>
            <person name="Kumar P."/>
            <person name="Chaerkady R."/>
            <person name="Ramachandran S."/>
            <person name="Dash D."/>
            <person name="Pandey A."/>
        </authorList>
    </citation>
    <scope>IDENTIFICATION BY MASS SPECTROMETRY [LARGE SCALE ANALYSIS]</scope>
    <source>
        <strain>ATCC 25618 / H37Rv</strain>
    </source>
</reference>
<proteinExistence type="evidence at protein level"/>
<keyword id="KW-0028">Amino-acid biosynthesis</keyword>
<keyword id="KW-0057">Aromatic amino acid biosynthesis</keyword>
<keyword id="KW-0315">Glutamine amidotransferase</keyword>
<keyword id="KW-0456">Lyase</keyword>
<keyword id="KW-1185">Reference proteome</keyword>
<keyword id="KW-0822">Tryptophan biosynthesis</keyword>
<name>TRPG_MYCTU</name>
<accession>P9WN35</accession>
<accession>L0T2A5</accession>
<accession>Q79G16</accession>
<accession>Q7DAK6</accession>
<organism>
    <name type="scientific">Mycobacterium tuberculosis (strain ATCC 25618 / H37Rv)</name>
    <dbReference type="NCBI Taxonomy" id="83332"/>
    <lineage>
        <taxon>Bacteria</taxon>
        <taxon>Bacillati</taxon>
        <taxon>Actinomycetota</taxon>
        <taxon>Actinomycetes</taxon>
        <taxon>Mycobacteriales</taxon>
        <taxon>Mycobacteriaceae</taxon>
        <taxon>Mycobacterium</taxon>
        <taxon>Mycobacterium tuberculosis complex</taxon>
    </lineage>
</organism>
<sequence length="232" mass="24627">MRILVVDNYDSFVFNLVQYLGQLGIEAEVWRNDDHRLSDEAAVAGQFDGVLLSPGPGTPERAGASVSIVHACAAAHTPLLGVCLGHQAIGVAFGATVDRAPELLHGKTSSVFHTNVGVLQGLPDPFTATRYHSLTILPKSLPAVLRVTARTSSGVIMAVQHTGLPIHGVQFHPESILTEGGHRILANWLTCCGWTQDDTLVRRLENEVLTAISPHFPTSTASAGEATGRTSA</sequence>
<evidence type="ECO:0000250" key="1"/>
<evidence type="ECO:0000250" key="2">
    <source>
        <dbReference type="UniProtKB" id="P00900"/>
    </source>
</evidence>
<evidence type="ECO:0000255" key="3">
    <source>
        <dbReference type="PROSITE-ProRule" id="PRU00605"/>
    </source>
</evidence>
<dbReference type="EC" id="4.1.3.27"/>
<dbReference type="EMBL" id="AL123456">
    <property type="protein sequence ID" value="CCP42735.1"/>
    <property type="molecule type" value="Genomic_DNA"/>
</dbReference>
<dbReference type="PIR" id="C70699">
    <property type="entry name" value="C70699"/>
</dbReference>
<dbReference type="RefSeq" id="WP_003899773.1">
    <property type="nucleotide sequence ID" value="NZ_NVQJ01000005.1"/>
</dbReference>
<dbReference type="RefSeq" id="YP_177615.1">
    <property type="nucleotide sequence ID" value="NC_000962.3"/>
</dbReference>
<dbReference type="SMR" id="P9WN35"/>
<dbReference type="FunCoup" id="P9WN35">
    <property type="interactions" value="192"/>
</dbReference>
<dbReference type="STRING" id="83332.Rv0013"/>
<dbReference type="PaxDb" id="83332-Rv0013"/>
<dbReference type="DNASU" id="885955"/>
<dbReference type="GeneID" id="885955"/>
<dbReference type="KEGG" id="mtu:Rv0013"/>
<dbReference type="KEGG" id="mtv:RVBD_0013"/>
<dbReference type="TubercuList" id="Rv0013"/>
<dbReference type="eggNOG" id="COG0512">
    <property type="taxonomic scope" value="Bacteria"/>
</dbReference>
<dbReference type="InParanoid" id="P9WN35"/>
<dbReference type="OrthoDB" id="9803598at2"/>
<dbReference type="PhylomeDB" id="P9WN35"/>
<dbReference type="UniPathway" id="UPA00035">
    <property type="reaction ID" value="UER00040"/>
</dbReference>
<dbReference type="Proteomes" id="UP000001584">
    <property type="component" value="Chromosome"/>
</dbReference>
<dbReference type="GO" id="GO:0005886">
    <property type="term" value="C:plasma membrane"/>
    <property type="evidence" value="ECO:0007005"/>
    <property type="project" value="MTBBASE"/>
</dbReference>
<dbReference type="GO" id="GO:0004049">
    <property type="term" value="F:anthranilate synthase activity"/>
    <property type="evidence" value="ECO:0007669"/>
    <property type="project" value="UniProtKB-EC"/>
</dbReference>
<dbReference type="GO" id="GO:0000162">
    <property type="term" value="P:L-tryptophan biosynthetic process"/>
    <property type="evidence" value="ECO:0000318"/>
    <property type="project" value="GO_Central"/>
</dbReference>
<dbReference type="CDD" id="cd01743">
    <property type="entry name" value="GATase1_Anthranilate_Synthase"/>
    <property type="match status" value="1"/>
</dbReference>
<dbReference type="FunFam" id="3.40.50.880:FF:000003">
    <property type="entry name" value="Anthranilate synthase component II"/>
    <property type="match status" value="1"/>
</dbReference>
<dbReference type="Gene3D" id="3.40.50.880">
    <property type="match status" value="1"/>
</dbReference>
<dbReference type="InterPro" id="IPR050472">
    <property type="entry name" value="Anth_synth/Amidotransfase"/>
</dbReference>
<dbReference type="InterPro" id="IPR029062">
    <property type="entry name" value="Class_I_gatase-like"/>
</dbReference>
<dbReference type="InterPro" id="IPR017926">
    <property type="entry name" value="GATASE"/>
</dbReference>
<dbReference type="InterPro" id="IPR006221">
    <property type="entry name" value="TrpG/PapA_dom"/>
</dbReference>
<dbReference type="NCBIfam" id="NF005849">
    <property type="entry name" value="PRK07765.1"/>
    <property type="match status" value="1"/>
</dbReference>
<dbReference type="NCBIfam" id="TIGR00566">
    <property type="entry name" value="trpG_papA"/>
    <property type="match status" value="1"/>
</dbReference>
<dbReference type="PANTHER" id="PTHR43418:SF4">
    <property type="entry name" value="MULTIFUNCTIONAL TRYPTOPHAN BIOSYNTHESIS PROTEIN"/>
    <property type="match status" value="1"/>
</dbReference>
<dbReference type="PANTHER" id="PTHR43418">
    <property type="entry name" value="MULTIFUNCTIONAL TRYPTOPHAN BIOSYNTHESIS PROTEIN-RELATED"/>
    <property type="match status" value="1"/>
</dbReference>
<dbReference type="Pfam" id="PF00117">
    <property type="entry name" value="GATase"/>
    <property type="match status" value="1"/>
</dbReference>
<dbReference type="PRINTS" id="PR00097">
    <property type="entry name" value="ANTSNTHASEII"/>
</dbReference>
<dbReference type="PRINTS" id="PR00099">
    <property type="entry name" value="CPSGATASE"/>
</dbReference>
<dbReference type="PRINTS" id="PR00096">
    <property type="entry name" value="GATASE"/>
</dbReference>
<dbReference type="SUPFAM" id="SSF52317">
    <property type="entry name" value="Class I glutamine amidotransferase-like"/>
    <property type="match status" value="1"/>
</dbReference>
<dbReference type="PROSITE" id="PS51273">
    <property type="entry name" value="GATASE_TYPE_1"/>
    <property type="match status" value="1"/>
</dbReference>